<feature type="chain" id="PRO_0000046962" description="Protein hunchback">
    <location>
        <begin position="1" status="less than"/>
        <end position="196" status="greater than"/>
    </location>
</feature>
<feature type="region of interest" description="Disordered" evidence="2">
    <location>
        <begin position="16"/>
        <end position="60"/>
    </location>
</feature>
<feature type="region of interest" description="Disordered" evidence="2">
    <location>
        <begin position="90"/>
        <end position="196"/>
    </location>
</feature>
<feature type="compositionally biased region" description="Basic residues" evidence="2">
    <location>
        <begin position="17"/>
        <end position="30"/>
    </location>
</feature>
<feature type="compositionally biased region" description="Polar residues" evidence="2">
    <location>
        <begin position="92"/>
        <end position="103"/>
    </location>
</feature>
<feature type="compositionally biased region" description="Low complexity" evidence="2">
    <location>
        <begin position="125"/>
        <end position="144"/>
    </location>
</feature>
<feature type="compositionally biased region" description="Basic and acidic residues" evidence="2">
    <location>
        <begin position="176"/>
        <end position="196"/>
    </location>
</feature>
<feature type="non-consecutive residues" evidence="3">
    <location>
        <begin position="102"/>
        <end position="103"/>
    </location>
</feature>
<feature type="non-terminal residue">
    <location>
        <position position="1"/>
    </location>
</feature>
<feature type="non-terminal residue">
    <location>
        <position position="196"/>
    </location>
</feature>
<reference key="1">
    <citation type="journal article" date="1997" name="Syst. Biol.">
        <title>Multiple sources of character information and the phylogeny of Hawaiian Drosophilids.</title>
        <authorList>
            <person name="Baker R.H."/>
            <person name="DeSalle R."/>
        </authorList>
    </citation>
    <scope>NUCLEOTIDE SEQUENCE [GENOMIC DNA]</scope>
</reference>
<proteinExistence type="inferred from homology"/>
<gene>
    <name type="primary">hb</name>
</gene>
<name>HUNB_DROSL</name>
<evidence type="ECO:0000250" key="1"/>
<evidence type="ECO:0000256" key="2">
    <source>
        <dbReference type="SAM" id="MobiDB-lite"/>
    </source>
</evidence>
<evidence type="ECO:0000305" key="3"/>
<accession>O46256</accession>
<accession>O46257</accession>
<organism>
    <name type="scientific">Drosophila silvestris</name>
    <name type="common">Fruit fly</name>
    <dbReference type="NCBI Taxonomy" id="47010"/>
    <lineage>
        <taxon>Eukaryota</taxon>
        <taxon>Metazoa</taxon>
        <taxon>Ecdysozoa</taxon>
        <taxon>Arthropoda</taxon>
        <taxon>Hexapoda</taxon>
        <taxon>Insecta</taxon>
        <taxon>Pterygota</taxon>
        <taxon>Neoptera</taxon>
        <taxon>Endopterygota</taxon>
        <taxon>Diptera</taxon>
        <taxon>Brachycera</taxon>
        <taxon>Muscomorpha</taxon>
        <taxon>Ephydroidea</taxon>
        <taxon>Drosophilidae</taxon>
        <taxon>Drosophila</taxon>
        <taxon>Hawaiian Drosophila</taxon>
    </lineage>
</organism>
<keyword id="KW-0217">Developmental protein</keyword>
<keyword id="KW-0238">DNA-binding</keyword>
<keyword id="KW-0302">Gap protein</keyword>
<keyword id="KW-0479">Metal-binding</keyword>
<keyword id="KW-0539">Nucleus</keyword>
<keyword id="KW-0677">Repeat</keyword>
<keyword id="KW-0862">Zinc</keyword>
<keyword id="KW-0863">Zinc-finger</keyword>
<protein>
    <recommendedName>
        <fullName>Protein hunchback</fullName>
    </recommendedName>
</protein>
<sequence>WYSGMFAPNIKQEPISHHHHHHHAHHSYHQHPHDSNSNSNASSPHQSPLPSPNPPSNTNLQLEQYLKQQQQQQQQQQQQQQPMDTLCAAAMTPSSSNNDQNSPLMPPGLPNPMQSIMPANLRPSPTATTTTTPAAAAPTTTAATIALQANDKLQALTPPMDVTPPKSPAKSQQSCAEREKEHDLMSNSSEDMKYMA</sequence>
<dbReference type="EMBL" id="U93020">
    <property type="protein sequence ID" value="AAC03268.1"/>
    <property type="molecule type" value="Genomic_DNA"/>
</dbReference>
<dbReference type="EMBL" id="U93021">
    <property type="protein sequence ID" value="AAC03269.1"/>
    <property type="molecule type" value="Genomic_DNA"/>
</dbReference>
<dbReference type="SMR" id="O46256"/>
<dbReference type="GO" id="GO:0005634">
    <property type="term" value="C:nucleus"/>
    <property type="evidence" value="ECO:0007669"/>
    <property type="project" value="UniProtKB-SubCell"/>
</dbReference>
<dbReference type="GO" id="GO:0003677">
    <property type="term" value="F:DNA binding"/>
    <property type="evidence" value="ECO:0007669"/>
    <property type="project" value="UniProtKB-KW"/>
</dbReference>
<dbReference type="GO" id="GO:0008270">
    <property type="term" value="F:zinc ion binding"/>
    <property type="evidence" value="ECO:0007669"/>
    <property type="project" value="UniProtKB-KW"/>
</dbReference>
<dbReference type="GO" id="GO:0035282">
    <property type="term" value="P:segmentation"/>
    <property type="evidence" value="ECO:0007669"/>
    <property type="project" value="UniProtKB-KW"/>
</dbReference>
<comment type="function">
    <text evidence="1">Gap class segmentation protein that controls development of head structures.</text>
</comment>
<comment type="subcellular location">
    <subcellularLocation>
        <location evidence="1">Nucleus</location>
    </subcellularLocation>
</comment>
<comment type="similarity">
    <text evidence="3">Belongs to the hunchback C2H2-type zinc-finger protein family.</text>
</comment>